<comment type="function">
    <text evidence="8 9 10 12 15 16">Endocytic receptor which plays a role in lipoprotein, vitamin and iron metabolism by facilitating their uptake. Acts together with LRP2 to mediate endocytosis of high-density lipoproteins, GC, hemoglobin, ALB, TF and SCGB1A1. Acts together with AMN to mediate endocytosis of the CBLIF-cobalamin complex. Binds to ALB, MB, Kappa and lambda-light chains, TF, hemoglobin, GC, SCGB1A1, APOA1, high density lipoprotein, and the CBLIF-cobalamin complex. Ligand binding requires calcium. Serves as important transporter in several absorptive epithelia, including intestine, renal proximal tubules and embryonic yolk sac. May play an important role in the development of the peri-implantation embryo through internalization of APOA1 and cholesterol. Binds to LGALS3 at the maternal-fetal interface.</text>
</comment>
<comment type="subunit">
    <text evidence="2 3 11 13 14 16">Interacts with AMN (PubMed:14576052, PubMed:29402915). Component of the cubam complex composed of one CUBN trimer and one AMN chain (By similarity). The cubam complex can dimerize (By similarity). Interacts with LRP2 in a dual-receptor complex in a calcium-dependent manner (PubMed:9478979). Found in a complex with PID1/PCLI1, LRP1 and CUBNI. Interacts with LRP1 and PID1/PCLI1 (By similarity) (PubMed:20237569).</text>
</comment>
<comment type="interaction">
    <interactant intactId="EBI-3954161">
        <id>O70244</id>
    </interactant>
    <interactant intactId="EBI-3954161">
        <id>O70244</id>
        <label>Cubn</label>
    </interactant>
    <organismsDiffer>false</organismsDiffer>
    <experiments>2</experiments>
</comment>
<comment type="subcellular location">
    <subcellularLocation>
        <location evidence="14">Cell membrane</location>
        <topology evidence="17">Peripheral membrane protein</topology>
    </subcellularLocation>
    <subcellularLocation>
        <location evidence="16">Endosome membrane</location>
        <topology evidence="16">Peripheral membrane protein</topology>
    </subcellularLocation>
    <subcellularLocation>
        <location evidence="16">Lysosome membrane</location>
        <topology evidence="16">Peripheral membrane protein</topology>
    </subcellularLocation>
    <text evidence="3 16">Lacks a transmembrane domain and depends on interaction with AMN for location at the plasma membrane (By similarity). Colocalizes with AMN and LRP2 in the endocytotic apparatus of epithelial cells (PubMed:9478979).</text>
</comment>
<comment type="tissue specificity">
    <text evidence="15">Expressed to intestinal, renal and yalk sac apical membranes. In kidney, expressed in the proximal tubule.</text>
</comment>
<comment type="developmental stage">
    <text evidence="12">Expressed at 6 dpc in primitive endoderm cells, in apical membrane invaginations, in endocytic vesicles, endoplasmic reticulum and Golgi apparatus. At the egg cylinder stage (7-8 dpc), expressed in visceral and parietal endoderm. From the early headfold stage (8.9 dpc), expressed in ectodermal cells lining the proamniotic cavity. At 10 dpc, detected in the newly forming neuroepithelium.</text>
</comment>
<comment type="domain">
    <text evidence="7">The CUB domains 5 to 8 mediate binding to CBLIF and ALB. CUB domains 1 and 2 mediate interaction with LRP2.</text>
</comment>
<comment type="domain">
    <text evidence="2">The cubam complex is composed of a 400 Angstrom long stem and a globular crown region. The stem region is probably formed by AMN and the CUBN N-terminal region, including the EGF-like domains. The crown is probably formed by the CUBN CUB domains.</text>
</comment>
<comment type="PTM">
    <text evidence="3">The precursor is cleaved by a trans-Golgi proteinase furin, removing a propeptide.</text>
</comment>
<comment type="PTM">
    <text evidence="14 16">N-glycosylated.</text>
</comment>
<dbReference type="EMBL" id="AF022247">
    <property type="protein sequence ID" value="AAC71661.1"/>
    <property type="molecule type" value="mRNA"/>
</dbReference>
<dbReference type="PIR" id="T08618">
    <property type="entry name" value="T08618"/>
</dbReference>
<dbReference type="RefSeq" id="NP_445784.1">
    <property type="nucleotide sequence ID" value="NM_053332.2"/>
</dbReference>
<dbReference type="SMR" id="O70244"/>
<dbReference type="BioGRID" id="249486">
    <property type="interactions" value="1"/>
</dbReference>
<dbReference type="CORUM" id="O70244"/>
<dbReference type="FunCoup" id="O70244">
    <property type="interactions" value="45"/>
</dbReference>
<dbReference type="STRING" id="10116.ENSRNOP00000075097"/>
<dbReference type="GlyCosmos" id="O70244">
    <property type="glycosylation" value="42 sites, No reported glycans"/>
</dbReference>
<dbReference type="GlyGen" id="O70244">
    <property type="glycosylation" value="43 sites"/>
</dbReference>
<dbReference type="iPTMnet" id="O70244"/>
<dbReference type="PhosphoSitePlus" id="O70244"/>
<dbReference type="PaxDb" id="10116-ENSRNOP00000048477"/>
<dbReference type="GeneID" id="80848"/>
<dbReference type="KEGG" id="rno:80848"/>
<dbReference type="UCSC" id="RGD:68355">
    <property type="organism name" value="rat"/>
</dbReference>
<dbReference type="AGR" id="RGD:68355"/>
<dbReference type="CTD" id="8029"/>
<dbReference type="RGD" id="68355">
    <property type="gene designation" value="Cubn"/>
</dbReference>
<dbReference type="eggNOG" id="KOG4292">
    <property type="taxonomic scope" value="Eukaryota"/>
</dbReference>
<dbReference type="InParanoid" id="O70244"/>
<dbReference type="OrthoDB" id="6512949at2759"/>
<dbReference type="PhylomeDB" id="O70244"/>
<dbReference type="Reactome" id="R-RNO-196791">
    <property type="pathway name" value="Vitamin D (calciferol) metabolism"/>
</dbReference>
<dbReference type="Reactome" id="R-RNO-8964011">
    <property type="pathway name" value="HDL clearance"/>
</dbReference>
<dbReference type="Reactome" id="R-RNO-9758881">
    <property type="pathway name" value="Uptake of dietary cobalamins into enterocytes"/>
</dbReference>
<dbReference type="PRO" id="PR:O70244"/>
<dbReference type="Proteomes" id="UP000002494">
    <property type="component" value="Unplaced"/>
</dbReference>
<dbReference type="GO" id="GO:0045177">
    <property type="term" value="C:apical part of cell"/>
    <property type="evidence" value="ECO:0000266"/>
    <property type="project" value="RGD"/>
</dbReference>
<dbReference type="GO" id="GO:0016324">
    <property type="term" value="C:apical plasma membrane"/>
    <property type="evidence" value="ECO:0000314"/>
    <property type="project" value="UniProtKB"/>
</dbReference>
<dbReference type="GO" id="GO:0005903">
    <property type="term" value="C:brush border"/>
    <property type="evidence" value="ECO:0000266"/>
    <property type="project" value="RGD"/>
</dbReference>
<dbReference type="GO" id="GO:0031526">
    <property type="term" value="C:brush border membrane"/>
    <property type="evidence" value="ECO:0000314"/>
    <property type="project" value="UniProtKB"/>
</dbReference>
<dbReference type="GO" id="GO:0005905">
    <property type="term" value="C:clathrin-coated pit"/>
    <property type="evidence" value="ECO:0000314"/>
    <property type="project" value="UniProtKB"/>
</dbReference>
<dbReference type="GO" id="GO:0030135">
    <property type="term" value="C:coated vesicle"/>
    <property type="evidence" value="ECO:0000314"/>
    <property type="project" value="UniProtKB"/>
</dbReference>
<dbReference type="GO" id="GO:0005737">
    <property type="term" value="C:cytoplasm"/>
    <property type="evidence" value="ECO:0000266"/>
    <property type="project" value="RGD"/>
</dbReference>
<dbReference type="GO" id="GO:0030139">
    <property type="term" value="C:endocytic vesicle"/>
    <property type="evidence" value="ECO:0000266"/>
    <property type="project" value="RGD"/>
</dbReference>
<dbReference type="GO" id="GO:0030666">
    <property type="term" value="C:endocytic vesicle membrane"/>
    <property type="evidence" value="ECO:0000314"/>
    <property type="project" value="RGD"/>
</dbReference>
<dbReference type="GO" id="GO:0005783">
    <property type="term" value="C:endoplasmic reticulum"/>
    <property type="evidence" value="ECO:0000266"/>
    <property type="project" value="RGD"/>
</dbReference>
<dbReference type="GO" id="GO:0005768">
    <property type="term" value="C:endosome"/>
    <property type="evidence" value="ECO:0000266"/>
    <property type="project" value="RGD"/>
</dbReference>
<dbReference type="GO" id="GO:0010008">
    <property type="term" value="C:endosome membrane"/>
    <property type="evidence" value="ECO:0007669"/>
    <property type="project" value="UniProtKB-SubCell"/>
</dbReference>
<dbReference type="GO" id="GO:0070062">
    <property type="term" value="C:extracellular exosome"/>
    <property type="evidence" value="ECO:0000266"/>
    <property type="project" value="RGD"/>
</dbReference>
<dbReference type="GO" id="GO:0005794">
    <property type="term" value="C:Golgi apparatus"/>
    <property type="evidence" value="ECO:0000266"/>
    <property type="project" value="RGD"/>
</dbReference>
<dbReference type="GO" id="GO:0005798">
    <property type="term" value="C:Golgi-associated vesicle"/>
    <property type="evidence" value="ECO:0000314"/>
    <property type="project" value="RGD"/>
</dbReference>
<dbReference type="GO" id="GO:0043202">
    <property type="term" value="C:lysosomal lumen"/>
    <property type="evidence" value="ECO:0000314"/>
    <property type="project" value="RGD"/>
</dbReference>
<dbReference type="GO" id="GO:0005765">
    <property type="term" value="C:lysosomal membrane"/>
    <property type="evidence" value="ECO:0007669"/>
    <property type="project" value="UniProtKB-SubCell"/>
</dbReference>
<dbReference type="GO" id="GO:0016020">
    <property type="term" value="C:membrane"/>
    <property type="evidence" value="ECO:0000266"/>
    <property type="project" value="RGD"/>
</dbReference>
<dbReference type="GO" id="GO:0031528">
    <property type="term" value="C:microvillus membrane"/>
    <property type="evidence" value="ECO:0000266"/>
    <property type="project" value="RGD"/>
</dbReference>
<dbReference type="GO" id="GO:0005886">
    <property type="term" value="C:plasma membrane"/>
    <property type="evidence" value="ECO:0000318"/>
    <property type="project" value="GO_Central"/>
</dbReference>
<dbReference type="GO" id="GO:0032991">
    <property type="term" value="C:protein-containing complex"/>
    <property type="evidence" value="ECO:0000314"/>
    <property type="project" value="RGD"/>
</dbReference>
<dbReference type="GO" id="GO:0043235">
    <property type="term" value="C:receptor complex"/>
    <property type="evidence" value="ECO:0000314"/>
    <property type="project" value="UniProtKB"/>
</dbReference>
<dbReference type="GO" id="GO:0005509">
    <property type="term" value="F:calcium ion binding"/>
    <property type="evidence" value="ECO:0007669"/>
    <property type="project" value="InterPro"/>
</dbReference>
<dbReference type="GO" id="GO:0038024">
    <property type="term" value="F:cargo receptor activity"/>
    <property type="evidence" value="ECO:0000315"/>
    <property type="project" value="UniProtKB"/>
</dbReference>
<dbReference type="GO" id="GO:0031419">
    <property type="term" value="F:cobalamin binding"/>
    <property type="evidence" value="ECO:0007669"/>
    <property type="project" value="UniProtKB-KW"/>
</dbReference>
<dbReference type="GO" id="GO:0030492">
    <property type="term" value="F:hemoglobin binding"/>
    <property type="evidence" value="ECO:0000314"/>
    <property type="project" value="RGD"/>
</dbReference>
<dbReference type="GO" id="GO:0042802">
    <property type="term" value="F:identical protein binding"/>
    <property type="evidence" value="ECO:0000353"/>
    <property type="project" value="IntAct"/>
</dbReference>
<dbReference type="GO" id="GO:0042803">
    <property type="term" value="F:protein homodimerization activity"/>
    <property type="evidence" value="ECO:0000266"/>
    <property type="project" value="RGD"/>
</dbReference>
<dbReference type="GO" id="GO:0008203">
    <property type="term" value="P:cholesterol metabolic process"/>
    <property type="evidence" value="ECO:0007669"/>
    <property type="project" value="UniProtKB-KW"/>
</dbReference>
<dbReference type="GO" id="GO:0042366">
    <property type="term" value="P:cobalamin catabolic process"/>
    <property type="evidence" value="ECO:0000315"/>
    <property type="project" value="RGD"/>
</dbReference>
<dbReference type="GO" id="GO:0009235">
    <property type="term" value="P:cobalamin metabolic process"/>
    <property type="evidence" value="ECO:0000266"/>
    <property type="project" value="RGD"/>
</dbReference>
<dbReference type="GO" id="GO:0015889">
    <property type="term" value="P:cobalamin transport"/>
    <property type="evidence" value="ECO:0000315"/>
    <property type="project" value="UniProtKB"/>
</dbReference>
<dbReference type="GO" id="GO:0020028">
    <property type="term" value="P:endocytic hemoglobin import into cell"/>
    <property type="evidence" value="ECO:0000315"/>
    <property type="project" value="RGD"/>
</dbReference>
<dbReference type="GO" id="GO:0051649">
    <property type="term" value="P:establishment of localization in cell"/>
    <property type="evidence" value="ECO:0000266"/>
    <property type="project" value="RGD"/>
</dbReference>
<dbReference type="GO" id="GO:0001701">
    <property type="term" value="P:in utero embryonic development"/>
    <property type="evidence" value="ECO:0000314"/>
    <property type="project" value="RGD"/>
</dbReference>
<dbReference type="GO" id="GO:0042953">
    <property type="term" value="P:lipoprotein transport"/>
    <property type="evidence" value="ECO:0000266"/>
    <property type="project" value="RGD"/>
</dbReference>
<dbReference type="GO" id="GO:0006898">
    <property type="term" value="P:receptor-mediated endocytosis"/>
    <property type="evidence" value="ECO:0000314"/>
    <property type="project" value="RGD"/>
</dbReference>
<dbReference type="GO" id="GO:0009617">
    <property type="term" value="P:response to bacterium"/>
    <property type="evidence" value="ECO:0000266"/>
    <property type="project" value="RGD"/>
</dbReference>
<dbReference type="GO" id="GO:0007584">
    <property type="term" value="P:response to nutrient"/>
    <property type="evidence" value="ECO:0000315"/>
    <property type="project" value="RGD"/>
</dbReference>
<dbReference type="CDD" id="cd00041">
    <property type="entry name" value="CUB"/>
    <property type="match status" value="27"/>
</dbReference>
<dbReference type="CDD" id="cd22201">
    <property type="entry name" value="cubilin_NTD"/>
    <property type="match status" value="1"/>
</dbReference>
<dbReference type="CDD" id="cd00054">
    <property type="entry name" value="EGF_CA"/>
    <property type="match status" value="6"/>
</dbReference>
<dbReference type="FunFam" id="2.10.25.10:FF:000379">
    <property type="entry name" value="Cubilin"/>
    <property type="match status" value="1"/>
</dbReference>
<dbReference type="FunFam" id="2.10.25.10:FF:000429">
    <property type="entry name" value="Cubilin"/>
    <property type="match status" value="1"/>
</dbReference>
<dbReference type="FunFam" id="2.10.25.10:FF:000554">
    <property type="entry name" value="Cubilin"/>
    <property type="match status" value="1"/>
</dbReference>
<dbReference type="FunFam" id="2.60.120.290:FF:000045">
    <property type="entry name" value="Cubilin"/>
    <property type="match status" value="1"/>
</dbReference>
<dbReference type="FunFam" id="2.60.120.290:FF:000047">
    <property type="entry name" value="Cubilin"/>
    <property type="match status" value="1"/>
</dbReference>
<dbReference type="FunFam" id="2.60.120.290:FF:000050">
    <property type="entry name" value="Cubilin"/>
    <property type="match status" value="1"/>
</dbReference>
<dbReference type="FunFam" id="2.60.120.290:FF:000053">
    <property type="entry name" value="Cubilin"/>
    <property type="match status" value="1"/>
</dbReference>
<dbReference type="FunFam" id="2.60.120.290:FF:000062">
    <property type="entry name" value="Cubilin"/>
    <property type="match status" value="1"/>
</dbReference>
<dbReference type="FunFam" id="2.10.25.10:FF:000633">
    <property type="entry name" value="cubilin"/>
    <property type="match status" value="1"/>
</dbReference>
<dbReference type="FunFam" id="2.60.120.290:FF:000018">
    <property type="entry name" value="cubilin"/>
    <property type="match status" value="5"/>
</dbReference>
<dbReference type="FunFam" id="2.60.120.290:FF:000061">
    <property type="entry name" value="cubilin"/>
    <property type="match status" value="1"/>
</dbReference>
<dbReference type="FunFam" id="2.60.120.290:FF:000013">
    <property type="entry name" value="Membrane frizzled-related protein"/>
    <property type="match status" value="8"/>
</dbReference>
<dbReference type="FunFam" id="2.60.120.290:FF:000003">
    <property type="entry name" value="Neuropilin"/>
    <property type="match status" value="4"/>
</dbReference>
<dbReference type="FunFam" id="2.10.25.10:FF:000260">
    <property type="entry name" value="Notch receptor 4"/>
    <property type="match status" value="1"/>
</dbReference>
<dbReference type="FunFam" id="2.60.120.290:FF:000005">
    <property type="entry name" value="Procollagen C-endopeptidase enhancer 1"/>
    <property type="match status" value="4"/>
</dbReference>
<dbReference type="FunFam" id="2.10.25.10:FF:000143">
    <property type="entry name" value="Protein crumbs 1"/>
    <property type="match status" value="2"/>
</dbReference>
<dbReference type="Gene3D" id="2.10.25.10">
    <property type="entry name" value="Laminin"/>
    <property type="match status" value="7"/>
</dbReference>
<dbReference type="Gene3D" id="2.60.120.290">
    <property type="entry name" value="Spermadhesin, CUB domain"/>
    <property type="match status" value="27"/>
</dbReference>
<dbReference type="InterPro" id="IPR000859">
    <property type="entry name" value="CUB_dom"/>
</dbReference>
<dbReference type="InterPro" id="IPR001881">
    <property type="entry name" value="EGF-like_Ca-bd_dom"/>
</dbReference>
<dbReference type="InterPro" id="IPR013032">
    <property type="entry name" value="EGF-like_CS"/>
</dbReference>
<dbReference type="InterPro" id="IPR000742">
    <property type="entry name" value="EGF-like_dom"/>
</dbReference>
<dbReference type="InterPro" id="IPR000152">
    <property type="entry name" value="EGF-type_Asp/Asn_hydroxyl_site"/>
</dbReference>
<dbReference type="InterPro" id="IPR018097">
    <property type="entry name" value="EGF_Ca-bd_CS"/>
</dbReference>
<dbReference type="InterPro" id="IPR024731">
    <property type="entry name" value="EGF_dom"/>
</dbReference>
<dbReference type="InterPro" id="IPR049883">
    <property type="entry name" value="NOTCH1_EGF-like"/>
</dbReference>
<dbReference type="InterPro" id="IPR035914">
    <property type="entry name" value="Sperma_CUB_dom_sf"/>
</dbReference>
<dbReference type="PANTHER" id="PTHR24251:SF37">
    <property type="entry name" value="CUB DOMAIN-CONTAINING PROTEIN"/>
    <property type="match status" value="1"/>
</dbReference>
<dbReference type="PANTHER" id="PTHR24251">
    <property type="entry name" value="OVOCHYMASE-RELATED"/>
    <property type="match status" value="1"/>
</dbReference>
<dbReference type="Pfam" id="PF00431">
    <property type="entry name" value="CUB"/>
    <property type="match status" value="27"/>
</dbReference>
<dbReference type="Pfam" id="PF00008">
    <property type="entry name" value="EGF"/>
    <property type="match status" value="2"/>
</dbReference>
<dbReference type="Pfam" id="PF12947">
    <property type="entry name" value="EGF_3"/>
    <property type="match status" value="1"/>
</dbReference>
<dbReference type="Pfam" id="PF07645">
    <property type="entry name" value="EGF_CA"/>
    <property type="match status" value="3"/>
</dbReference>
<dbReference type="Pfam" id="PF12661">
    <property type="entry name" value="hEGF"/>
    <property type="match status" value="1"/>
</dbReference>
<dbReference type="SMART" id="SM00042">
    <property type="entry name" value="CUB"/>
    <property type="match status" value="27"/>
</dbReference>
<dbReference type="SMART" id="SM00181">
    <property type="entry name" value="EGF"/>
    <property type="match status" value="8"/>
</dbReference>
<dbReference type="SMART" id="SM00179">
    <property type="entry name" value="EGF_CA"/>
    <property type="match status" value="7"/>
</dbReference>
<dbReference type="SUPFAM" id="SSF57196">
    <property type="entry name" value="EGF/Laminin"/>
    <property type="match status" value="6"/>
</dbReference>
<dbReference type="SUPFAM" id="SSF49854">
    <property type="entry name" value="Spermadhesin, CUB domain"/>
    <property type="match status" value="27"/>
</dbReference>
<dbReference type="PROSITE" id="PS00010">
    <property type="entry name" value="ASX_HYDROXYL"/>
    <property type="match status" value="3"/>
</dbReference>
<dbReference type="PROSITE" id="PS01180">
    <property type="entry name" value="CUB"/>
    <property type="match status" value="27"/>
</dbReference>
<dbReference type="PROSITE" id="PS00022">
    <property type="entry name" value="EGF_1"/>
    <property type="match status" value="4"/>
</dbReference>
<dbReference type="PROSITE" id="PS01186">
    <property type="entry name" value="EGF_2"/>
    <property type="match status" value="2"/>
</dbReference>
<dbReference type="PROSITE" id="PS50026">
    <property type="entry name" value="EGF_3"/>
    <property type="match status" value="6"/>
</dbReference>
<dbReference type="PROSITE" id="PS01187">
    <property type="entry name" value="EGF_CA"/>
    <property type="match status" value="4"/>
</dbReference>
<proteinExistence type="evidence at protein level"/>
<reference key="1">
    <citation type="journal article" date="1998" name="J. Biol. Chem.">
        <title>The intrinsic factor-vitamin B12 receptor and target of teratogenic antibodies is a megalin-binding peripheral membrane protein with homology to developmental proteins.</title>
        <authorList>
            <person name="Moestrup S.K."/>
            <person name="Kozyraki R."/>
            <person name="Kristiansen M."/>
            <person name="Kaysen J.H."/>
            <person name="Rasmussen H.H."/>
            <person name="Brault D."/>
            <person name="Pontillon F."/>
            <person name="Goda F.O."/>
            <person name="Christensen E.I."/>
            <person name="Hammond T.G."/>
            <person name="Verroust P.J."/>
        </authorList>
    </citation>
    <scope>NUCLEOTIDE SEQUENCE [MRNA]</scope>
    <scope>PROTEIN SEQUENCE OF 41-53; 85-93; 120-130; 530-547; 578-581; 1843-1856 AND 2070-2076</scope>
    <scope>FUNCTION</scope>
    <scope>INTERACTION WITH LRP2</scope>
    <scope>SUBCELLULAR LOCATION</scope>
    <scope>GLYCOSYLATION</scope>
    <source>
        <tissue>Kidney cortex</tissue>
    </source>
</reference>
<reference key="2">
    <citation type="journal article" date="1997" name="J. Clin. Invest.">
        <title>Identification of rat yolk sac target protein of teratogenic antibodies, gp280, as intrinsic factor-cobalamin receptor.</title>
        <authorList>
            <person name="Seetharam B."/>
            <person name="Christensen E.I."/>
            <person name="Moestrup S.K."/>
            <person name="Hammond T.G."/>
            <person name="Verroust P.J."/>
        </authorList>
    </citation>
    <scope>BINDING TO CBLIF-COBALAMIN COMPLEX</scope>
    <scope>TISSUE SPECIFICITY</scope>
    <scope>FUNCTION</scope>
</reference>
<reference key="3">
    <citation type="journal article" date="1998" name="Am. J. Physiol.">
        <title>Myeloma light chains are ligands for cubilin (gp280).</title>
        <authorList>
            <person name="Batuman V."/>
            <person name="Verroust P.J."/>
            <person name="Navar G.L."/>
            <person name="Kaysen J.H."/>
            <person name="Goda F.O."/>
            <person name="Campbell W.C."/>
            <person name="Simon E."/>
            <person name="Pontillon F."/>
            <person name="Lyles M."/>
            <person name="Bruno J."/>
            <person name="Hammond T.G."/>
        </authorList>
    </citation>
    <scope>INTERACTION WITH KAPPA-LIGHT AND LAMBDA-LIGHT CHAINS</scope>
</reference>
<reference key="4">
    <citation type="journal article" date="1999" name="J. Biol. Chem.">
        <title>Molecular dissection of the intrinsic factor-vitamin B12 receptor, cubilin, discloses regions important for membrane association and ligand binding.</title>
        <authorList>
            <person name="Kristiansen M."/>
            <person name="Kozyraki R."/>
            <person name="Jacobsen C."/>
            <person name="Nexoe E."/>
            <person name="Verroust P.J."/>
            <person name="Moestrup S.K."/>
        </authorList>
    </citation>
    <scope>DOMAIN</scope>
</reference>
<reference key="5">
    <citation type="journal article" date="2000" name="J. Clin. Invest.">
        <title>Cubilin is an albumin binding protein important for renal tubular albumin reabsorption.</title>
        <authorList>
            <person name="Birn H."/>
            <person name="Fyfe J.C."/>
            <person name="Jacobsen C."/>
            <person name="Mounier F."/>
            <person name="Verroust P.J."/>
            <person name="Oerskov H."/>
            <person name="Willnow T.E."/>
            <person name="Moestrup S.K."/>
            <person name="Christensen E.I."/>
        </authorList>
    </citation>
    <scope>INTERACTION WITH ALB</scope>
    <scope>FUNCTION</scope>
</reference>
<reference key="6">
    <citation type="journal article" date="2002" name="J. Am. Soc. Nephrol.">
        <title>Megalin and cubilin are endocytic receptors involved in renal clearance of hemoglobin.</title>
        <authorList>
            <person name="Gburek J."/>
            <person name="Verroust P.J."/>
            <person name="Willnow T.E."/>
            <person name="Fyfe J.C."/>
            <person name="Nowacki W."/>
            <person name="Jacobsen C."/>
            <person name="Moestrup S.K."/>
            <person name="Christensen E.I."/>
        </authorList>
    </citation>
    <scope>INTERACTION WITH HEMOGLOBIN</scope>
    <scope>FUNCTION</scope>
</reference>
<reference key="7">
    <citation type="journal article" date="2003" name="Am. J. Physiol.">
        <title>Renal uptake of myoglobin is mediated by the endocytic receptors megalin and cubilin.</title>
        <authorList>
            <person name="Gburek J."/>
            <person name="Birn H."/>
            <person name="Verroust P.J."/>
            <person name="Goj B."/>
            <person name="Jacobsen C."/>
            <person name="Moestrup S.K."/>
            <person name="Willnow T.E."/>
            <person name="Christensen E.I."/>
        </authorList>
    </citation>
    <scope>INTERACTION WITH MB</scope>
    <scope>FUNCTION</scope>
</reference>
<reference key="8">
    <citation type="journal article" date="2004" name="Blood">
        <title>The functional cobalamin (vitamin B12)-intrinsic factor receptor is a novel complex of cubilin and amnionless.</title>
        <authorList>
            <person name="Fyfe J.C."/>
            <person name="Madsen M."/>
            <person name="Hoejrup P."/>
            <person name="Christensen E.I."/>
            <person name="Tanner S.M."/>
            <person name="de la Chapelle A."/>
            <person name="He Q."/>
            <person name="Moestrup S.K."/>
        </authorList>
    </citation>
    <scope>INTERACTION WITH AMN</scope>
</reference>
<reference key="9">
    <citation type="journal article" date="2005" name="Biol. Reprod.">
        <title>Expression and role of cubilin in the internalization of nutrients during the peri-implantation development of the rodent embryo.</title>
        <authorList>
            <person name="Assemat E."/>
            <person name="Vinot S."/>
            <person name="Gofflot F."/>
            <person name="Linsel-Nitschke P."/>
            <person name="Illien F."/>
            <person name="Chatelet F."/>
            <person name="Verroust P.J."/>
            <person name="Louvet-Vallee S."/>
            <person name="Rinninger F."/>
            <person name="Kozyraki R."/>
        </authorList>
    </citation>
    <scope>DEVELOPMENTAL STAGE</scope>
    <scope>FUNCTION</scope>
</reference>
<reference key="10">
    <citation type="journal article" date="2006" name="Proc. Natl. Acad. Sci. U.S.A.">
        <title>Quantitative phosphoproteomics of vasopressin-sensitive renal cells: regulation of aquaporin-2 phosphorylation at two sites.</title>
        <authorList>
            <person name="Hoffert J.D."/>
            <person name="Pisitkun T."/>
            <person name="Wang G."/>
            <person name="Shen R.-F."/>
            <person name="Knepper M.A."/>
        </authorList>
    </citation>
    <scope>PHOSPHORYLATION [LARGE SCALE ANALYSIS] AT THR-3008</scope>
    <scope>IDENTIFICATION BY MASS SPECTROMETRY [LARGE SCALE ANALYSIS]</scope>
</reference>
<reference key="11">
    <citation type="journal article" date="2010" name="Nature">
        <title>Structural basis for receptor recognition of vitamin-B(12)-intrinsic factor complexes.</title>
        <authorList>
            <person name="Andersen C.B."/>
            <person name="Madsen M."/>
            <person name="Storm T."/>
            <person name="Moestrup S.K."/>
            <person name="Andersen G.R."/>
        </authorList>
    </citation>
    <scope>SUBUNIT</scope>
</reference>
<reference key="12">
    <citation type="journal article" date="2018" name="Sci. Rep.">
        <title>Amnionless-mediated glycosylation is crucial for cell surface targeting of cubilin in renal and intestinal cells.</title>
        <authorList>
            <person name="Udagawa T."/>
            <person name="Harita Y."/>
            <person name="Miura K."/>
            <person name="Mitsui J."/>
            <person name="Ode K.L."/>
            <person name="Morishita S."/>
            <person name="Urae S."/>
            <person name="Kanda S."/>
            <person name="Kajiho Y."/>
            <person name="Tsurumi H."/>
            <person name="Ueda H.R."/>
            <person name="Tsuji S."/>
            <person name="Saito A."/>
            <person name="Oka A."/>
        </authorList>
    </citation>
    <scope>SUBCELLULAR LOCATION</scope>
    <scope>INTERACTION WITH AMN</scope>
    <scope>GLYCOSYLATION AT ASN-711; ASN-749; ASN-781 AND ASN-857</scope>
    <scope>MUTAGENESIS OF GLY-142; CYS-222; PRO-334; ARG-651; GLY-653; ASN-711; ASN-749; ASN-781; SER-829; ASN-857 AND SER-865</scope>
</reference>
<name>CUBN_RAT</name>
<evidence type="ECO:0000250" key="1"/>
<evidence type="ECO:0000250" key="2">
    <source>
        <dbReference type="UniProtKB" id="F1RWC3"/>
    </source>
</evidence>
<evidence type="ECO:0000250" key="3">
    <source>
        <dbReference type="UniProtKB" id="O60494"/>
    </source>
</evidence>
<evidence type="ECO:0000255" key="4"/>
<evidence type="ECO:0000255" key="5">
    <source>
        <dbReference type="PROSITE-ProRule" id="PRU00059"/>
    </source>
</evidence>
<evidence type="ECO:0000255" key="6">
    <source>
        <dbReference type="PROSITE-ProRule" id="PRU00076"/>
    </source>
</evidence>
<evidence type="ECO:0000269" key="7">
    <source>
    </source>
</evidence>
<evidence type="ECO:0000269" key="8">
    <source>
    </source>
</evidence>
<evidence type="ECO:0000269" key="9">
    <source>
    </source>
</evidence>
<evidence type="ECO:0000269" key="10">
    <source>
    </source>
</evidence>
<evidence type="ECO:0000269" key="11">
    <source>
    </source>
</evidence>
<evidence type="ECO:0000269" key="12">
    <source>
    </source>
</evidence>
<evidence type="ECO:0000269" key="13">
    <source>
    </source>
</evidence>
<evidence type="ECO:0000269" key="14">
    <source>
    </source>
</evidence>
<evidence type="ECO:0000269" key="15">
    <source>
    </source>
</evidence>
<evidence type="ECO:0000269" key="16">
    <source>
    </source>
</evidence>
<evidence type="ECO:0000305" key="17">
    <source>
    </source>
</evidence>
<evidence type="ECO:0007744" key="18">
    <source>
    </source>
</evidence>
<feature type="signal peptide" evidence="4">
    <location>
        <begin position="1"/>
        <end position="20"/>
    </location>
</feature>
<feature type="propeptide" id="PRO_0000046076" description="Removed in mature form" evidence="3">
    <location>
        <begin position="21"/>
        <end position="32"/>
    </location>
</feature>
<feature type="chain" id="PRO_0000046077" description="Cubilin">
    <location>
        <begin position="33"/>
        <end position="3623"/>
    </location>
</feature>
<feature type="domain" description="EGF-like 1" evidence="6">
    <location>
        <begin position="129"/>
        <end position="165"/>
    </location>
</feature>
<feature type="domain" description="EGF-like 2; calcium-binding" evidence="6">
    <location>
        <begin position="167"/>
        <end position="208"/>
    </location>
</feature>
<feature type="domain" description="EGF-like 3; calcium-binding" evidence="6">
    <location>
        <begin position="260"/>
        <end position="301"/>
    </location>
</feature>
<feature type="domain" description="EGF-like 4; calcium-binding" evidence="6">
    <location>
        <begin position="302"/>
        <end position="345"/>
    </location>
</feature>
<feature type="domain" description="EGF-like 5" evidence="6">
    <location>
        <begin position="346"/>
        <end position="385"/>
    </location>
</feature>
<feature type="domain" description="EGF-like 6" evidence="6">
    <location>
        <begin position="395"/>
        <end position="430"/>
    </location>
</feature>
<feature type="domain" description="EGF-like 7; calcium-binding" evidence="6">
    <location>
        <begin position="432"/>
        <end position="468"/>
    </location>
</feature>
<feature type="domain" description="CUB 1" evidence="5">
    <location>
        <begin position="474"/>
        <end position="586"/>
    </location>
</feature>
<feature type="domain" description="CUB 2" evidence="5">
    <location>
        <begin position="590"/>
        <end position="702"/>
    </location>
</feature>
<feature type="domain" description="CUB 3" evidence="5">
    <location>
        <begin position="708"/>
        <end position="816"/>
    </location>
</feature>
<feature type="domain" description="CUB 4" evidence="5">
    <location>
        <begin position="817"/>
        <end position="928"/>
    </location>
</feature>
<feature type="domain" description="CUB 5" evidence="5">
    <location>
        <begin position="932"/>
        <end position="1042"/>
    </location>
</feature>
<feature type="domain" description="CUB 6" evidence="5">
    <location>
        <begin position="1048"/>
        <end position="1161"/>
    </location>
</feature>
<feature type="domain" description="CUB 7" evidence="5">
    <location>
        <begin position="1165"/>
        <end position="1277"/>
    </location>
</feature>
<feature type="domain" description="CUB 8" evidence="5">
    <location>
        <begin position="1278"/>
        <end position="1389"/>
    </location>
</feature>
<feature type="domain" description="CUB 9" evidence="5">
    <location>
        <begin position="1391"/>
        <end position="1506"/>
    </location>
</feature>
<feature type="domain" description="CUB 10" evidence="5">
    <location>
        <begin position="1510"/>
        <end position="1619"/>
    </location>
</feature>
<feature type="domain" description="CUB 11" evidence="5">
    <location>
        <begin position="1620"/>
        <end position="1734"/>
    </location>
</feature>
<feature type="domain" description="CUB 12" evidence="5">
    <location>
        <begin position="1738"/>
        <end position="1850"/>
    </location>
</feature>
<feature type="domain" description="CUB 13" evidence="5">
    <location>
        <begin position="1852"/>
        <end position="1963"/>
    </location>
</feature>
<feature type="domain" description="CUB 14" evidence="5">
    <location>
        <begin position="1978"/>
        <end position="2091"/>
    </location>
</feature>
<feature type="domain" description="CUB 15" evidence="5">
    <location>
        <begin position="2092"/>
        <end position="2213"/>
    </location>
</feature>
<feature type="domain" description="CUB 16" evidence="5">
    <location>
        <begin position="2217"/>
        <end position="2334"/>
    </location>
</feature>
<feature type="domain" description="CUB 17" evidence="5">
    <location>
        <begin position="2336"/>
        <end position="2448"/>
    </location>
</feature>
<feature type="domain" description="CUB 18" evidence="5">
    <location>
        <begin position="2452"/>
        <end position="2565"/>
    </location>
</feature>
<feature type="domain" description="CUB 19" evidence="5">
    <location>
        <begin position="2570"/>
        <end position="2687"/>
    </location>
</feature>
<feature type="domain" description="CUB 20" evidence="5">
    <location>
        <begin position="2689"/>
        <end position="2801"/>
    </location>
</feature>
<feature type="domain" description="CUB 21" evidence="5">
    <location>
        <begin position="2805"/>
        <end position="2919"/>
    </location>
</feature>
<feature type="domain" description="CUB 22" evidence="5">
    <location>
        <begin position="2920"/>
        <end position="3035"/>
    </location>
</feature>
<feature type="domain" description="CUB 23" evidence="5">
    <location>
        <begin position="3037"/>
        <end position="3150"/>
    </location>
</feature>
<feature type="domain" description="CUB 24" evidence="5">
    <location>
        <begin position="3157"/>
        <end position="3274"/>
    </location>
</feature>
<feature type="domain" description="CUB 25" evidence="5">
    <location>
        <begin position="3278"/>
        <end position="3393"/>
    </location>
</feature>
<feature type="domain" description="CUB 26" evidence="5">
    <location>
        <begin position="3395"/>
        <end position="3507"/>
    </location>
</feature>
<feature type="domain" description="CUB 27" evidence="5">
    <location>
        <begin position="3511"/>
        <end position="3623"/>
    </location>
</feature>
<feature type="region of interest" description="Interaction with AMN" evidence="3">
    <location>
        <begin position="39"/>
        <end position="46"/>
    </location>
</feature>
<feature type="binding site" evidence="3">
    <location>
        <position position="980"/>
    </location>
    <ligand>
        <name>Ca(2+)</name>
        <dbReference type="ChEBI" id="CHEBI:29108"/>
        <label>1</label>
    </ligand>
</feature>
<feature type="binding site" evidence="3">
    <location>
        <position position="988"/>
    </location>
    <ligand>
        <name>Ca(2+)</name>
        <dbReference type="ChEBI" id="CHEBI:29108"/>
        <label>1</label>
    </ligand>
</feature>
<feature type="binding site" evidence="3">
    <location>
        <position position="1027"/>
    </location>
    <ligand>
        <name>Ca(2+)</name>
        <dbReference type="ChEBI" id="CHEBI:29108"/>
        <label>1</label>
    </ligand>
</feature>
<feature type="binding site" evidence="3">
    <location>
        <position position="1030"/>
    </location>
    <ligand>
        <name>Ca(2+)</name>
        <dbReference type="ChEBI" id="CHEBI:29108"/>
        <label>1</label>
    </ligand>
</feature>
<feature type="binding site" evidence="3">
    <location>
        <position position="1096"/>
    </location>
    <ligand>
        <name>Ca(2+)</name>
        <dbReference type="ChEBI" id="CHEBI:29108"/>
        <label>2</label>
    </ligand>
</feature>
<feature type="binding site" evidence="3">
    <location>
        <position position="1105"/>
    </location>
    <ligand>
        <name>Ca(2+)</name>
        <dbReference type="ChEBI" id="CHEBI:29108"/>
        <label>2</label>
    </ligand>
</feature>
<feature type="binding site" evidence="3">
    <location>
        <position position="1146"/>
    </location>
    <ligand>
        <name>Ca(2+)</name>
        <dbReference type="ChEBI" id="CHEBI:29108"/>
        <label>2</label>
    </ligand>
</feature>
<feature type="binding site" evidence="3">
    <location>
        <position position="1213"/>
    </location>
    <ligand>
        <name>Ca(2+)</name>
        <dbReference type="ChEBI" id="CHEBI:29108"/>
        <label>3</label>
    </ligand>
</feature>
<feature type="binding site" evidence="3">
    <location>
        <position position="1221"/>
    </location>
    <ligand>
        <name>Ca(2+)</name>
        <dbReference type="ChEBI" id="CHEBI:29108"/>
        <label>3</label>
    </ligand>
</feature>
<feature type="binding site" evidence="3">
    <location>
        <position position="1262"/>
    </location>
    <ligand>
        <name>Ca(2+)</name>
        <dbReference type="ChEBI" id="CHEBI:29108"/>
        <label>3</label>
    </ligand>
</feature>
<feature type="binding site" evidence="3">
    <location>
        <position position="1264"/>
    </location>
    <ligand>
        <name>Ca(2+)</name>
        <dbReference type="ChEBI" id="CHEBI:29108"/>
        <label>3</label>
    </ligand>
</feature>
<feature type="binding site" evidence="3">
    <location>
        <position position="1265"/>
    </location>
    <ligand>
        <name>Ca(2+)</name>
        <dbReference type="ChEBI" id="CHEBI:29108"/>
        <label>3</label>
    </ligand>
</feature>
<feature type="binding site" evidence="3">
    <location>
        <position position="1328"/>
    </location>
    <ligand>
        <name>Ca(2+)</name>
        <dbReference type="ChEBI" id="CHEBI:29108"/>
        <label>4</label>
    </ligand>
</feature>
<feature type="binding site" evidence="3">
    <location>
        <position position="1336"/>
    </location>
    <ligand>
        <name>Ca(2+)</name>
        <dbReference type="ChEBI" id="CHEBI:29108"/>
        <label>4</label>
    </ligand>
</feature>
<feature type="binding site" evidence="3">
    <location>
        <position position="1373"/>
    </location>
    <ligand>
        <name>Ca(2+)</name>
        <dbReference type="ChEBI" id="CHEBI:29108"/>
        <label>4</label>
    </ligand>
</feature>
<feature type="binding site" evidence="3">
    <location>
        <position position="1375"/>
    </location>
    <ligand>
        <name>Ca(2+)</name>
        <dbReference type="ChEBI" id="CHEBI:29108"/>
        <label>4</label>
    </ligand>
</feature>
<feature type="site" description="Cleavage; by furin" evidence="4">
    <location>
        <begin position="32"/>
        <end position="33"/>
    </location>
</feature>
<feature type="modified residue" description="Phosphothreonine" evidence="18">
    <location>
        <position position="3008"/>
    </location>
</feature>
<feature type="glycosylation site" description="N-linked (GlcNAc...) asparagine" evidence="4">
    <location>
        <position position="95"/>
    </location>
</feature>
<feature type="glycosylation site" description="N-linked (GlcNAc...) asparagine" evidence="4">
    <location>
        <position position="428"/>
    </location>
</feature>
<feature type="glycosylation site" description="N-linked (GlcNAc...) asparagine" evidence="4">
    <location>
        <position position="491"/>
    </location>
</feature>
<feature type="glycosylation site" description="N-linked (GlcNAc...) asparagine" evidence="17">
    <location>
        <position position="711"/>
    </location>
</feature>
<feature type="glycosylation site" description="N-linked (GlcNAc...) asparagine" evidence="17">
    <location>
        <position position="749"/>
    </location>
</feature>
<feature type="glycosylation site" description="N-linked (GlcNAc...) asparagine" evidence="17">
    <location>
        <position position="781"/>
    </location>
</feature>
<feature type="glycosylation site" description="N-linked (GlcNAc...) asparagine" evidence="17">
    <location>
        <position position="857"/>
    </location>
</feature>
<feature type="glycosylation site" description="N-linked (GlcNAc...) asparagine" evidence="4">
    <location>
        <position position="957"/>
    </location>
</feature>
<feature type="glycosylation site" description="N-linked (GlcNAc...) asparagine" evidence="4">
    <location>
        <position position="984"/>
    </location>
</feature>
<feature type="glycosylation site" description="N-linked (GlcNAc...) asparagine" evidence="4">
    <location>
        <position position="1168"/>
    </location>
</feature>
<feature type="glycosylation site" description="N-linked (GlcNAc...) asparagine" evidence="4">
    <location>
        <position position="1285"/>
    </location>
</feature>
<feature type="glycosylation site" description="N-linked (GlcNAc...) asparagine" evidence="4">
    <location>
        <position position="1307"/>
    </location>
</feature>
<feature type="glycosylation site" description="N-linked (GlcNAc...) asparagine" evidence="4">
    <location>
        <position position="1319"/>
    </location>
</feature>
<feature type="glycosylation site" description="N-linked (GlcNAc...) asparagine" evidence="4">
    <location>
        <position position="1332"/>
    </location>
</feature>
<feature type="glycosylation site" description="N-linked (GlcNAc...) asparagine" evidence="4">
    <location>
        <position position="1500"/>
    </location>
</feature>
<feature type="glycosylation site" description="N-linked (GlcNAc...) asparagine" evidence="4">
    <location>
        <position position="1551"/>
    </location>
</feature>
<feature type="glycosylation site" description="N-linked (GlcNAc...) asparagine" evidence="4">
    <location>
        <position position="1646"/>
    </location>
</feature>
<feature type="glycosylation site" description="N-linked (GlcNAc...) asparagine" evidence="4">
    <location>
        <position position="1671"/>
    </location>
</feature>
<feature type="glycosylation site" description="N-linked (GlcNAc...) asparagine" evidence="4">
    <location>
        <position position="1802"/>
    </location>
</feature>
<feature type="glycosylation site" description="N-linked (GlcNAc...) asparagine" evidence="4">
    <location>
        <position position="1819"/>
    </location>
</feature>
<feature type="glycosylation site" description="N-linked (GlcNAc...) asparagine" evidence="4">
    <location>
        <position position="2085"/>
    </location>
</feature>
<feature type="glycosylation site" description="N-linked (GlcNAc...) asparagine" evidence="4">
    <location>
        <position position="2117"/>
    </location>
</feature>
<feature type="glycosylation site" description="N-linked (GlcNAc...) asparagine" evidence="4">
    <location>
        <position position="2274"/>
    </location>
</feature>
<feature type="glycosylation site" description="N-linked (GlcNAc...) asparagine" evidence="4">
    <location>
        <position position="2400"/>
    </location>
</feature>
<feature type="glycosylation site" description="N-linked (GlcNAc...) asparagine" evidence="4">
    <location>
        <position position="2531"/>
    </location>
</feature>
<feature type="glycosylation site" description="N-linked (GlcNAc...) asparagine" evidence="4">
    <location>
        <position position="2581"/>
    </location>
</feature>
<feature type="glycosylation site" description="N-linked (GlcNAc...) asparagine" evidence="4">
    <location>
        <position position="2610"/>
    </location>
</feature>
<feature type="glycosylation site" description="N-linked (GlcNAc...) asparagine" evidence="4">
    <location>
        <position position="2813"/>
    </location>
</feature>
<feature type="glycosylation site" description="N-linked (GlcNAc...) asparagine" evidence="4">
    <location>
        <position position="2875"/>
    </location>
</feature>
<feature type="glycosylation site" description="N-linked (GlcNAc...) asparagine" evidence="4">
    <location>
        <position position="2945"/>
    </location>
</feature>
<feature type="glycosylation site" description="N-linked (GlcNAc...) asparagine" evidence="4">
    <location>
        <position position="2989"/>
    </location>
</feature>
<feature type="glycosylation site" description="N-linked (GlcNAc...) asparagine" evidence="4">
    <location>
        <position position="3042"/>
    </location>
</feature>
<feature type="glycosylation site" description="N-linked (GlcNAc...) asparagine" evidence="4">
    <location>
        <position position="3106"/>
    </location>
</feature>
<feature type="glycosylation site" description="N-linked (GlcNAc...) asparagine" evidence="4">
    <location>
        <position position="3125"/>
    </location>
</feature>
<feature type="glycosylation site" description="N-linked (GlcNAc...) asparagine" evidence="4">
    <location>
        <position position="3165"/>
    </location>
</feature>
<feature type="glycosylation site" description="N-linked (GlcNAc...) asparagine" evidence="4">
    <location>
        <position position="3268"/>
    </location>
</feature>
<feature type="glycosylation site" description="N-linked (GlcNAc...) asparagine" evidence="4">
    <location>
        <position position="3283"/>
    </location>
</feature>
<feature type="glycosylation site" description="N-linked (GlcNAc...) asparagine" evidence="4">
    <location>
        <position position="3290"/>
    </location>
</feature>
<feature type="glycosylation site" description="N-linked (GlcNAc...) asparagine" evidence="4">
    <location>
        <position position="3357"/>
    </location>
</feature>
<feature type="glycosylation site" description="N-linked (GlcNAc...) asparagine" evidence="4">
    <location>
        <position position="3400"/>
    </location>
</feature>
<feature type="glycosylation site" description="N-linked (GlcNAc...) asparagine" evidence="4">
    <location>
        <position position="3430"/>
    </location>
</feature>
<feature type="glycosylation site" description="N-linked (GlcNAc...) asparagine" evidence="4">
    <location>
        <position position="3533"/>
    </location>
</feature>
<feature type="disulfide bond" evidence="1">
    <location>
        <begin position="133"/>
        <end position="144"/>
    </location>
</feature>
<feature type="disulfide bond" evidence="1">
    <location>
        <begin position="138"/>
        <end position="153"/>
    </location>
</feature>
<feature type="disulfide bond" evidence="1">
    <location>
        <begin position="155"/>
        <end position="164"/>
    </location>
</feature>
<feature type="disulfide bond" evidence="1">
    <location>
        <begin position="171"/>
        <end position="187"/>
    </location>
</feature>
<feature type="disulfide bond" evidence="1">
    <location>
        <begin position="181"/>
        <end position="196"/>
    </location>
</feature>
<feature type="disulfide bond" evidence="1">
    <location>
        <begin position="198"/>
        <end position="207"/>
    </location>
</feature>
<feature type="disulfide bond" evidence="1">
    <location>
        <begin position="264"/>
        <end position="277"/>
    </location>
</feature>
<feature type="disulfide bond" evidence="1">
    <location>
        <begin position="271"/>
        <end position="286"/>
    </location>
</feature>
<feature type="disulfide bond" evidence="1">
    <location>
        <begin position="289"/>
        <end position="300"/>
    </location>
</feature>
<feature type="disulfide bond" evidence="1">
    <location>
        <begin position="350"/>
        <end position="363"/>
    </location>
</feature>
<feature type="disulfide bond" evidence="1">
    <location>
        <begin position="357"/>
        <end position="376"/>
    </location>
</feature>
<feature type="disulfide bond" evidence="1">
    <location>
        <begin position="399"/>
        <end position="409"/>
    </location>
</feature>
<feature type="disulfide bond" evidence="1">
    <location>
        <begin position="404"/>
        <end position="418"/>
    </location>
</feature>
<feature type="disulfide bond" evidence="1">
    <location>
        <begin position="420"/>
        <end position="429"/>
    </location>
</feature>
<feature type="disulfide bond" evidence="1">
    <location>
        <begin position="436"/>
        <end position="447"/>
    </location>
</feature>
<feature type="disulfide bond" evidence="1">
    <location>
        <begin position="441"/>
        <end position="456"/>
    </location>
</feature>
<feature type="disulfide bond" evidence="1">
    <location>
        <begin position="458"/>
        <end position="467"/>
    </location>
</feature>
<feature type="disulfide bond" evidence="1">
    <location>
        <begin position="474"/>
        <end position="500"/>
    </location>
</feature>
<feature type="disulfide bond" evidence="1">
    <location>
        <begin position="527"/>
        <end position="549"/>
    </location>
</feature>
<feature type="disulfide bond" evidence="1">
    <location>
        <begin position="590"/>
        <end position="616"/>
    </location>
</feature>
<feature type="disulfide bond" evidence="1">
    <location>
        <begin position="643"/>
        <end position="665"/>
    </location>
</feature>
<feature type="disulfide bond" evidence="1">
    <location>
        <begin position="708"/>
        <end position="734"/>
    </location>
</feature>
<feature type="disulfide bond" evidence="1">
    <location>
        <begin position="761"/>
        <end position="779"/>
    </location>
</feature>
<feature type="disulfide bond" evidence="1">
    <location>
        <begin position="817"/>
        <end position="842"/>
    </location>
</feature>
<feature type="disulfide bond" evidence="1">
    <location>
        <begin position="869"/>
        <end position="891"/>
    </location>
</feature>
<feature type="disulfide bond" evidence="1">
    <location>
        <begin position="932"/>
        <end position="958"/>
    </location>
</feature>
<feature type="disulfide bond" evidence="1">
    <location>
        <begin position="985"/>
        <end position="1005"/>
    </location>
</feature>
<feature type="disulfide bond" evidence="1">
    <location>
        <begin position="1048"/>
        <end position="1074"/>
    </location>
</feature>
<feature type="disulfide bond" evidence="1">
    <location>
        <begin position="1165"/>
        <end position="1191"/>
    </location>
</feature>
<feature type="disulfide bond" evidence="1">
    <location>
        <begin position="1218"/>
        <end position="1240"/>
    </location>
</feature>
<feature type="disulfide bond" evidence="1">
    <location>
        <begin position="1278"/>
        <end position="1306"/>
    </location>
</feature>
<feature type="disulfide bond" evidence="1">
    <location>
        <begin position="1333"/>
        <end position="1351"/>
    </location>
</feature>
<feature type="disulfide bond" evidence="1">
    <location>
        <begin position="1391"/>
        <end position="1417"/>
    </location>
</feature>
<feature type="disulfide bond" evidence="1">
    <location>
        <begin position="1444"/>
        <end position="1466"/>
    </location>
</feature>
<feature type="disulfide bond" evidence="1">
    <location>
        <begin position="1510"/>
        <end position="1536"/>
    </location>
</feature>
<feature type="disulfide bond" evidence="1">
    <location>
        <begin position="1620"/>
        <end position="1647"/>
    </location>
</feature>
<feature type="disulfide bond" evidence="1">
    <location>
        <begin position="1675"/>
        <end position="1697"/>
    </location>
</feature>
<feature type="disulfide bond" evidence="1">
    <location>
        <begin position="1738"/>
        <end position="1764"/>
    </location>
</feature>
<feature type="disulfide bond" evidence="1">
    <location>
        <begin position="1791"/>
        <end position="1812"/>
    </location>
</feature>
<feature type="disulfide bond" evidence="1">
    <location>
        <begin position="1905"/>
        <end position="1927"/>
    </location>
</feature>
<feature type="disulfide bond" evidence="1">
    <location>
        <begin position="1978"/>
        <end position="2006"/>
    </location>
</feature>
<feature type="disulfide bond" evidence="1">
    <location>
        <begin position="2032"/>
        <end position="2054"/>
    </location>
</feature>
<feature type="disulfide bond" evidence="1">
    <location>
        <begin position="2092"/>
        <end position="2118"/>
    </location>
</feature>
<feature type="disulfide bond" evidence="1">
    <location>
        <begin position="2217"/>
        <end position="2247"/>
    </location>
</feature>
<feature type="disulfide bond" evidence="1">
    <location>
        <begin position="2275"/>
        <end position="2297"/>
    </location>
</feature>
<feature type="disulfide bond" evidence="1">
    <location>
        <begin position="2336"/>
        <end position="2363"/>
    </location>
</feature>
<feature type="disulfide bond" evidence="1">
    <location>
        <begin position="2390"/>
        <end position="2411"/>
    </location>
</feature>
<feature type="disulfide bond" evidence="1">
    <location>
        <begin position="2452"/>
        <end position="2478"/>
    </location>
</feature>
<feature type="disulfide bond" evidence="1">
    <location>
        <begin position="2505"/>
        <end position="2527"/>
    </location>
</feature>
<feature type="disulfide bond" evidence="1">
    <location>
        <begin position="2570"/>
        <end position="2599"/>
    </location>
</feature>
<feature type="disulfide bond" evidence="1">
    <location>
        <begin position="2628"/>
        <end position="2649"/>
    </location>
</feature>
<feature type="disulfide bond" evidence="1">
    <location>
        <begin position="2689"/>
        <end position="2715"/>
    </location>
</feature>
<feature type="disulfide bond" evidence="1">
    <location>
        <begin position="2742"/>
        <end position="2764"/>
    </location>
</feature>
<feature type="disulfide bond" evidence="1">
    <location>
        <begin position="2805"/>
        <end position="2831"/>
    </location>
</feature>
<feature type="disulfide bond" evidence="1">
    <location>
        <begin position="2860"/>
        <end position="2883"/>
    </location>
</feature>
<feature type="disulfide bond" evidence="1">
    <location>
        <begin position="2920"/>
        <end position="2946"/>
    </location>
</feature>
<feature type="disulfide bond" evidence="1">
    <location>
        <begin position="2977"/>
        <end position="2999"/>
    </location>
</feature>
<feature type="disulfide bond" evidence="1">
    <location>
        <begin position="3037"/>
        <end position="3064"/>
    </location>
</feature>
<feature type="disulfide bond" evidence="1">
    <location>
        <begin position="3091"/>
        <end position="3113"/>
    </location>
</feature>
<feature type="disulfide bond" evidence="1">
    <location>
        <begin position="3157"/>
        <end position="3185"/>
    </location>
</feature>
<feature type="disulfide bond" evidence="1">
    <location>
        <begin position="3215"/>
        <end position="3237"/>
    </location>
</feature>
<feature type="disulfide bond" evidence="1">
    <location>
        <begin position="3278"/>
        <end position="3306"/>
    </location>
</feature>
<feature type="disulfide bond" evidence="1">
    <location>
        <begin position="3332"/>
        <end position="3354"/>
    </location>
</feature>
<feature type="disulfide bond" evidence="1">
    <location>
        <begin position="3395"/>
        <end position="3421"/>
    </location>
</feature>
<feature type="disulfide bond" evidence="1">
    <location>
        <begin position="3448"/>
        <end position="3470"/>
    </location>
</feature>
<feature type="disulfide bond" evidence="1">
    <location>
        <begin position="3511"/>
        <end position="3537"/>
    </location>
</feature>
<feature type="disulfide bond" evidence="1">
    <location>
        <begin position="3564"/>
        <end position="3586"/>
    </location>
</feature>
<feature type="mutagenesis site" description="No effect on trafficking to the cell surface." evidence="14">
    <original>G</original>
    <variation>E</variation>
    <location>
        <position position="142"/>
    </location>
</feature>
<feature type="mutagenesis site" description="Decreased AMN-dependent trafficking to the cell surface." evidence="14">
    <original>C</original>
    <variation>S</variation>
    <location>
        <position position="222"/>
    </location>
</feature>
<feature type="mutagenesis site" description="No effect on trafficking to the cell surface." evidence="14">
    <original>P</original>
    <variation>L</variation>
    <location>
        <position position="334"/>
    </location>
</feature>
<feature type="mutagenesis site" description="No effect on trafficking to the cell surface." evidence="14">
    <original>R</original>
    <variation>G</variation>
    <location>
        <position position="651"/>
    </location>
</feature>
<feature type="mutagenesis site" description="No effect on trafficking to the cell surface." evidence="14">
    <original>G</original>
    <variation>A</variation>
    <variation>S</variation>
    <location>
        <position position="653"/>
    </location>
</feature>
<feature type="mutagenesis site" description="Decreased AMN-dependent trafficking to the cell surface." evidence="14">
    <original>G</original>
    <variation>R</variation>
    <location>
        <position position="653"/>
    </location>
</feature>
<feature type="mutagenesis site" description="Impaired glycosylation and loss of export to the cell surface; when associated with D-749; D-781 and D-857." evidence="14">
    <original>N</original>
    <variation>D</variation>
    <location>
        <position position="711"/>
    </location>
</feature>
<feature type="mutagenesis site" description="Impaired glycosylation and loss of export to the cell surface; when associated with D-711; D-781 and D-857." evidence="14">
    <original>N</original>
    <variation>D</variation>
    <location>
        <position position="749"/>
    </location>
</feature>
<feature type="mutagenesis site" description="Impaired glycosylation and loss of export to the cell surface; when associated with D-711; D-749 and D-857." evidence="14">
    <original>N</original>
    <variation>D</variation>
    <location>
        <position position="781"/>
    </location>
</feature>
<feature type="mutagenesis site" description="Decreased AMN-dependent trafficking to the cell surface." evidence="14">
    <original>S</original>
    <variation>L</variation>
    <location>
        <position position="829"/>
    </location>
</feature>
<feature type="mutagenesis site" description="Impaired glycosylation and loss of export to the cell surface; when associated with D-711; D-749 and D-781." evidence="14">
    <original>N</original>
    <variation>D</variation>
    <location>
        <position position="857"/>
    </location>
</feature>
<feature type="mutagenesis site" description="No effect on trafficking to the cell surface." evidence="14">
    <original>S</original>
    <variation>N</variation>
    <location>
        <position position="865"/>
    </location>
</feature>
<organism>
    <name type="scientific">Rattus norvegicus</name>
    <name type="common">Rat</name>
    <dbReference type="NCBI Taxonomy" id="10116"/>
    <lineage>
        <taxon>Eukaryota</taxon>
        <taxon>Metazoa</taxon>
        <taxon>Chordata</taxon>
        <taxon>Craniata</taxon>
        <taxon>Vertebrata</taxon>
        <taxon>Euteleostomi</taxon>
        <taxon>Mammalia</taxon>
        <taxon>Eutheria</taxon>
        <taxon>Euarchontoglires</taxon>
        <taxon>Glires</taxon>
        <taxon>Rodentia</taxon>
        <taxon>Myomorpha</taxon>
        <taxon>Muroidea</taxon>
        <taxon>Muridae</taxon>
        <taxon>Murinae</taxon>
        <taxon>Rattus</taxon>
    </lineage>
</organism>
<gene>
    <name type="primary">Cubn</name>
    <name type="synonym">Ifcr</name>
</gene>
<protein>
    <recommendedName>
        <fullName>Cubilin</fullName>
    </recommendedName>
    <alternativeName>
        <fullName>460 kDa receptor</fullName>
    </alternativeName>
    <alternativeName>
        <fullName>Glycoprotein 280</fullName>
        <shortName>gp280</shortName>
    </alternativeName>
    <alternativeName>
        <fullName>Intrinsic factor-cobalamin receptor</fullName>
    </alternativeName>
    <alternativeName>
        <fullName>Intrinsic factor-vitamin B12 receptor</fullName>
    </alternativeName>
</protein>
<sequence length="3623" mass="398987">MSSQFLWGFVTLLMIAELDGKTGKPEQRGQKRIADLHQPRMTTEEGNLVFLTSSTQNIEFRTGSLGKIKLNDEDLGECLHQIQRNKDDIIDLRKNTTGLPQNILSQVHQLNSKLVDLERDFQNLQQNVERKVCSSNPCLNGGTCVNLHDSFVCICPSQWKGLFCSEDVNECVVYSGTPFGCQSGSTCVNTVGSFRCDCTPDTYGPQCASKYNDCEQGSKQLCKHGICEDLQRVHHGQPNFHCICDAGWTTPPNGISCTEDKDECSLQPSPCSEHAQCFNTQGSFYCGACPKGWQGNGYECQDINECEINNGGCSQAPLVPCLNTPGSFSCGNCPAGFSGDGRVCTPVDICSIHNGGCHPEATCSSSPVLGSFLPVCTCPPGYTGNGYGSNGCVRLSNICSRHPCVNGQCIETVSSYFCKCDSGWSGQNCTENINDCSSNPCLNGGTCIDGINGFTCDCTSSWTGYYCQTPQAACGGILSGTQGTFAYHSPNDTYIHNVNCFWIVRTDEEKVLHVTFTFFDLESASNCPREYLQIHDGDSSADFPLGRYCGSRPPQGIHSSANALYFHLYSEYIRSGRGFTARWEAKLPECGGILTDNYGSITSPGYPGNYPPGRDCVWQVLVNPNSLITFTFGTLSLESHNDCSKDYLEIRDGPFHQDPVLGKFCTSLSTPPLKTTGPAARIHFHSDSETSDKGFHITYLTTQSDLDCGGNYTDTDGELLLPPLSGPFSHSRQCVYLITQAQGEQIVINFTHVELESQMGCSHTYIEVGDHDSLLRKICGNETLFPIRSVSNKVWIRLRIDALVQKASFRADYQVACGGMLRGEGFFRSPFYPNAYPGRRTCRWTISQPQRQVVLLNFTDFQIGSSASCDTDYIEIGPSSVLGSPGNEKFCSSNIPSFITSVYNILYVTFVKSSSMENRGFTAKFSSDKLECGEVLTASTGIIESPGHPNVYPRGVNCTWHVVVQRGQLIRLEFSSFYLEFHYNCTNDYLEIYDTAAQTFLGRYCGKSIPPSLTSNSNSIKLIFVSDSALAHEGFSINYEAIDASSVCLYDYTDNFGMLSSPNFPNNYPSNWECIYRITVGLNQQIALHFTDFTLEDYFGSQCVDFVEIRDGGYETSPLVGIYCGSVLPPTIISHSNKLWLKFKSDAALTAKGFSAYWDGSSTGCGGNLTTPTGVLTSPNYPMPYYHSSECYWRLEASHGSPFELEFQDFHLEHHPSCSLDYLAVFDGPTTNSRLIDKLCGDTTPAPIRSNKDVVLLKLRTDAGQQGRGFEINFRQRCDNVVIVNKTSGILESINYPNPYDKNQRCNWTIQATTGNTVNYTFLGFDVESYMNCSTDYVELYDGPQWMGRYCGNNMPPPGATTGSQLHVLFHTDGINSGEKGFKMQWFTHGCGGEMSGTAGSFSSPGYPNSYPHNKECIWNIRVAPGSSIQLTIHDFDVEYHTSCNYDSLEIYAGLDFNSPRIAQLCSQSPSANPMQVSSTGNELAIRFKTDSTLNGRGFNASWRAVPGGCGGIIQLSRGEIHSPNYPNNYRANTECSWIIQVERHHRVLLNITDFDLEAPDSCLRLMDGSSSTNARVASVCGRQQPPNSIIASGNSLFVRFRSGSSSQNRGFRAEFREECGGRIMTDSSDTIFSPLYPHNYLHNQNCSWIIEAQPPFNHITLSFTHFQLQNSTDCTRDFVEILDGNDYDAPVQGRYCGFSLPHPIISFGNALTVRFVTDSTRSFEGFRAIYSASTSSCGGSFYTLDGIFNSPDYPADYHPNAECVWNIASSPGNRLQLSFLSFNLENSLNCNKDFVEIREGNATGHLIGRYCGNSLPGNYSSAEGHSLWVRFVSDGSGTGMGFQARFKNIFGNNNIVGTHGKIASPFWPGKYPYNSNYKWVVNVDAYHIIHGRILEMDIEPTTNCFYDSLKIYDGFDTHSRLIGTYCGTQTESFSSSRNSLTFQFSSDSSVSGRGFLLEWFAVDVSDSTPPTIAPGACGGFMVTGDTPVHIFSPGWPREYANGADCIWIIYAPDSTVELNILSLDIEPQQSCNYDKLIVKDGDSDLSPELAVLCGVSPPGPIRSTGEYMYIRFTSDTSVAGTGFNASFHKSCGGYLHADRGVITSPKYPDTYLPNLNCSWHVLVQTGLTIAVHFEQPFQIQNRDSFCSQGDYLVLRNGPDNHSPPLGPSGRNGRFCGMYAPSTLFTSGNEMFVQFISDSSNGGQGFKIRYEAKSLACGGTVYIHDADSDGYLTSPNYPANYPQHAECIWILEAPPGRSIQLQFEDQFNIEDTPNCSVSYLELRDGANSNARLVSKLCGHTLPHSWVSSRERIYLKFHTDGGSSYMGFKAKYSIASCGGTVSGDSGVIESIGYPTLPYANNVFCQWFIRGLPGHYLTLSFEDFNLQSSPGCTKDFVEIWENHTSGRVLGRYCGNSTPSSVDTSSNVASVKFVTDGSVTASGFRLQFKSSRQVCGGDLHGPTGTFTSPNYPNPNPHARICEWTITVQEGRRIVLTFTNLRLSTQPSCNSEHLIVFNGIRSNSPLLQKLCSRVNVTNEFKSSGNTMKVVFFTDGSRPYGGFTASYTSTEDAVCGGFLPSVSGGNFSSPGYNGIRDYARNLDCEWTLSNPNRENSSISIYFLELSIESHQDCTFDVLEFRVGDADGPLIEKFCSLSAPTAPLVIPYPQVWIHFVSNERVEYTGFYIEYSFTDCGGIRTGDNGVISSPNYPNLYSAWTHCSWLLKAPEGHTITLTFSDFLLEAHPTCTSDSVTVRNGDSPGSPVIGRYCGQSVPRPIQSGSNQLIVTFNTNNQGQTRGFYATWTTNALGCGGTFHSANGTIKSPHWPQTFPENSRCSWTVITHESKHWEISFDSNFRIPSSDSQCQNSFVKVWEGRLMINKTLLATSCGDVAPSPIVTSGNIFTAVFQSEEMAAQGFSASFISRCGRTFNTSPGDIISPNFPKQYDNNMNCTYLIDADPQSLVILTFVSFHLEDRSAITGTCDHDGLHIIKGRNLSSTPLVTICGSETLRPLTVDGPVLLNFYSDAYTTDFGFKISYRAITCGGIYNESSGILRSPSYSYSNYPNNLYCVYSLHVRSSRVIIIRFNDFDVAPSNLCAHDFLEVFDGPSIGNRSLGKFCGSTRPQTVKSTNSSLTLLFKTDSSQTARGWKIFFRETIGPQQGCGGYLTEDNQSFVSPDSDSNGRYDKGLSCIWYIVAPENKLVKLTFNVFTLEGPSSAGSCVYDYVQIADGASINSYLGGKFCGSRMPAPFISSGNFLTFQFVSDVTVEMRGFNATYTFVDMPCGGTYNATSTPQNASSPHLSNIGRPYSTCTWVIAAPPQQQVQITVWDLQLPSQDCSQSYLELQDSVQTGGNRVTQFCGANYTTLPVFYSSMSTAVVVFKSGVLNRNSQVQFSYQIADCNREYNQTFGNLKSPGWPQNYDNNLDCTIILRAPQNHSISLFFYWFQLEDSRQCMNDFLEVRNGGSSTSPLLDKYCSNLLPNPVFSQSNELYLHFHSDHSVTNNGYEIIWTSSAAGCGGTLLGDEGIFTNPGFPDSYPNNTHCEWTIVAPSGRPVSVGFPFLSIDSSGGCDQNYLIVFNGPDANSPPFGPLCGINTGIAPFYASSNRVFIRFHAEYTTRLSGFEIMWSS</sequence>
<keyword id="KW-0106">Calcium</keyword>
<keyword id="KW-1003">Cell membrane</keyword>
<keyword id="KW-0153">Cholesterol metabolism</keyword>
<keyword id="KW-0165">Cleavage on pair of basic residues</keyword>
<keyword id="KW-0846">Cobalamin</keyword>
<keyword id="KW-0170">Cobalt</keyword>
<keyword id="KW-0903">Direct protein sequencing</keyword>
<keyword id="KW-1015">Disulfide bond</keyword>
<keyword id="KW-0245">EGF-like domain</keyword>
<keyword id="KW-0967">Endosome</keyword>
<keyword id="KW-0325">Glycoprotein</keyword>
<keyword id="KW-0443">Lipid metabolism</keyword>
<keyword id="KW-0458">Lysosome</keyword>
<keyword id="KW-0472">Membrane</keyword>
<keyword id="KW-0479">Metal-binding</keyword>
<keyword id="KW-0597">Phosphoprotein</keyword>
<keyword id="KW-0653">Protein transport</keyword>
<keyword id="KW-1185">Reference proteome</keyword>
<keyword id="KW-0677">Repeat</keyword>
<keyword id="KW-0732">Signal</keyword>
<keyword id="KW-0753">Steroid metabolism</keyword>
<keyword id="KW-1207">Sterol metabolism</keyword>
<keyword id="KW-0813">Transport</keyword>
<accession>O70244</accession>